<keyword id="KW-0963">Cytoplasm</keyword>
<keyword id="KW-0479">Metal-binding</keyword>
<keyword id="KW-0539">Nucleus</keyword>
<keyword id="KW-1185">Reference proteome</keyword>
<keyword id="KW-0862">Zinc</keyword>
<keyword id="KW-0863">Zinc-finger</keyword>
<comment type="function">
    <text evidence="1">Involved in the proteasome-dependent degradation of fructose-1,6-bisphosphatase.</text>
</comment>
<comment type="subcellular location">
    <subcellularLocation>
        <location evidence="1">Cytoplasm</location>
    </subcellularLocation>
    <subcellularLocation>
        <location evidence="1">Nucleus</location>
    </subcellularLocation>
</comment>
<comment type="similarity">
    <text evidence="4">Belongs to the FYV10 family.</text>
</comment>
<protein>
    <recommendedName>
        <fullName>Protein FYV10</fullName>
    </recommendedName>
</protein>
<dbReference type="EMBL" id="CP017625">
    <property type="protein sequence ID" value="AOW28593.1"/>
    <property type="molecule type" value="Genomic_DNA"/>
</dbReference>
<dbReference type="RefSeq" id="XP_716606.1">
    <property type="nucleotide sequence ID" value="XM_711513.1"/>
</dbReference>
<dbReference type="SMR" id="Q5A4G9"/>
<dbReference type="FunCoup" id="Q5A4G9">
    <property type="interactions" value="939"/>
</dbReference>
<dbReference type="STRING" id="237561.Q5A4G9"/>
<dbReference type="EnsemblFungi" id="C3_05850W_A-T">
    <property type="protein sequence ID" value="C3_05850W_A-T-p1"/>
    <property type="gene ID" value="C3_05850W_A"/>
</dbReference>
<dbReference type="GeneID" id="3641758"/>
<dbReference type="KEGG" id="cal:CAALFM_C305850WA"/>
<dbReference type="CGD" id="CAL0000193350">
    <property type="gene designation" value="orf19.7365"/>
</dbReference>
<dbReference type="VEuPathDB" id="FungiDB:C3_05850W_A"/>
<dbReference type="eggNOG" id="KOG0396">
    <property type="taxonomic scope" value="Eukaryota"/>
</dbReference>
<dbReference type="HOGENOM" id="CLU_027445_2_0_1"/>
<dbReference type="InParanoid" id="Q5A4G9"/>
<dbReference type="OMA" id="ANHETAR"/>
<dbReference type="OrthoDB" id="1933455at2759"/>
<dbReference type="Proteomes" id="UP000000559">
    <property type="component" value="Chromosome 3"/>
</dbReference>
<dbReference type="GO" id="GO:0005737">
    <property type="term" value="C:cytoplasm"/>
    <property type="evidence" value="ECO:0000318"/>
    <property type="project" value="GO_Central"/>
</dbReference>
<dbReference type="GO" id="GO:0034657">
    <property type="term" value="C:GID complex"/>
    <property type="evidence" value="ECO:0000318"/>
    <property type="project" value="GO_Central"/>
</dbReference>
<dbReference type="GO" id="GO:0005634">
    <property type="term" value="C:nucleus"/>
    <property type="evidence" value="ECO:0000318"/>
    <property type="project" value="GO_Central"/>
</dbReference>
<dbReference type="GO" id="GO:0061630">
    <property type="term" value="F:ubiquitin protein ligase activity"/>
    <property type="evidence" value="ECO:0007669"/>
    <property type="project" value="InterPro"/>
</dbReference>
<dbReference type="GO" id="GO:0008270">
    <property type="term" value="F:zinc ion binding"/>
    <property type="evidence" value="ECO:0007669"/>
    <property type="project" value="UniProtKB-KW"/>
</dbReference>
<dbReference type="GO" id="GO:0045721">
    <property type="term" value="P:negative regulation of gluconeogenesis"/>
    <property type="evidence" value="ECO:0007669"/>
    <property type="project" value="UniProtKB-ARBA"/>
</dbReference>
<dbReference type="GO" id="GO:0043161">
    <property type="term" value="P:proteasome-mediated ubiquitin-dependent protein catabolic process"/>
    <property type="evidence" value="ECO:0000318"/>
    <property type="project" value="GO_Central"/>
</dbReference>
<dbReference type="InterPro" id="IPR024964">
    <property type="entry name" value="CTLH/CRA"/>
</dbReference>
<dbReference type="InterPro" id="IPR006595">
    <property type="entry name" value="CTLH_C"/>
</dbReference>
<dbReference type="InterPro" id="IPR045098">
    <property type="entry name" value="Fyv10_fam"/>
</dbReference>
<dbReference type="InterPro" id="IPR044063">
    <property type="entry name" value="ZF_RING_GID"/>
</dbReference>
<dbReference type="PANTHER" id="PTHR12170:SF2">
    <property type="entry name" value="E3 UBIQUITIN-PROTEIN TRANSFERASE MAEA"/>
    <property type="match status" value="1"/>
</dbReference>
<dbReference type="PANTHER" id="PTHR12170">
    <property type="entry name" value="MACROPHAGE ERYTHROBLAST ATTACHER-RELATED"/>
    <property type="match status" value="1"/>
</dbReference>
<dbReference type="Pfam" id="PF10607">
    <property type="entry name" value="CTLH"/>
    <property type="match status" value="1"/>
</dbReference>
<dbReference type="PROSITE" id="PS51867">
    <property type="entry name" value="ZF_RING_GID"/>
    <property type="match status" value="1"/>
</dbReference>
<reference key="1">
    <citation type="journal article" date="2004" name="Proc. Natl. Acad. Sci. U.S.A.">
        <title>The diploid genome sequence of Candida albicans.</title>
        <authorList>
            <person name="Jones T."/>
            <person name="Federspiel N.A."/>
            <person name="Chibana H."/>
            <person name="Dungan J."/>
            <person name="Kalman S."/>
            <person name="Magee B.B."/>
            <person name="Newport G."/>
            <person name="Thorstenson Y.R."/>
            <person name="Agabian N."/>
            <person name="Magee P.T."/>
            <person name="Davis R.W."/>
            <person name="Scherer S."/>
        </authorList>
    </citation>
    <scope>NUCLEOTIDE SEQUENCE [LARGE SCALE GENOMIC DNA]</scope>
    <source>
        <strain>SC5314 / ATCC MYA-2876</strain>
    </source>
</reference>
<reference key="2">
    <citation type="journal article" date="2007" name="Genome Biol.">
        <title>Assembly of the Candida albicans genome into sixteen supercontigs aligned on the eight chromosomes.</title>
        <authorList>
            <person name="van het Hoog M."/>
            <person name="Rast T.J."/>
            <person name="Martchenko M."/>
            <person name="Grindle S."/>
            <person name="Dignard D."/>
            <person name="Hogues H."/>
            <person name="Cuomo C."/>
            <person name="Berriman M."/>
            <person name="Scherer S."/>
            <person name="Magee B.B."/>
            <person name="Whiteway M."/>
            <person name="Chibana H."/>
            <person name="Nantel A."/>
            <person name="Magee P.T."/>
        </authorList>
    </citation>
    <scope>GENOME REANNOTATION</scope>
    <source>
        <strain>SC5314 / ATCC MYA-2876</strain>
    </source>
</reference>
<reference key="3">
    <citation type="journal article" date="2013" name="Genome Biol.">
        <title>Assembly of a phased diploid Candida albicans genome facilitates allele-specific measurements and provides a simple model for repeat and indel structure.</title>
        <authorList>
            <person name="Muzzey D."/>
            <person name="Schwartz K."/>
            <person name="Weissman J.S."/>
            <person name="Sherlock G."/>
        </authorList>
    </citation>
    <scope>NUCLEOTIDE SEQUENCE [LARGE SCALE GENOMIC DNA]</scope>
    <scope>GENOME REANNOTATION</scope>
    <source>
        <strain>SC5314 / ATCC MYA-2876</strain>
    </source>
</reference>
<accession>Q5A4G9</accession>
<accession>A0A1D8PKG6</accession>
<organism>
    <name type="scientific">Candida albicans (strain SC5314 / ATCC MYA-2876)</name>
    <name type="common">Yeast</name>
    <dbReference type="NCBI Taxonomy" id="237561"/>
    <lineage>
        <taxon>Eukaryota</taxon>
        <taxon>Fungi</taxon>
        <taxon>Dikarya</taxon>
        <taxon>Ascomycota</taxon>
        <taxon>Saccharomycotina</taxon>
        <taxon>Pichiomycetes</taxon>
        <taxon>Debaryomycetaceae</taxon>
        <taxon>Candida/Lodderomyces clade</taxon>
        <taxon>Candida</taxon>
    </lineage>
</organism>
<proteinExistence type="inferred from homology"/>
<name>FYV10_CANAL</name>
<gene>
    <name type="primary">FYV10</name>
    <name type="ordered locus">CAALFM_C305850WA</name>
    <name type="ORF">CaO19.7365</name>
</gene>
<evidence type="ECO:0000250" key="1"/>
<evidence type="ECO:0000255" key="2">
    <source>
        <dbReference type="PROSITE-ProRule" id="PRU01215"/>
    </source>
</evidence>
<evidence type="ECO:0000256" key="3">
    <source>
        <dbReference type="SAM" id="MobiDB-lite"/>
    </source>
</evidence>
<evidence type="ECO:0000305" key="4"/>
<feature type="chain" id="PRO_0000292454" description="Protein FYV10">
    <location>
        <begin position="1"/>
        <end position="572"/>
    </location>
</feature>
<feature type="domain" description="CTLH">
    <location>
        <begin position="210"/>
        <end position="268"/>
    </location>
</feature>
<feature type="zinc finger region" description="RING-Gid-type" evidence="2">
    <location>
        <begin position="491"/>
        <end position="557"/>
    </location>
</feature>
<feature type="region of interest" description="Disordered" evidence="3">
    <location>
        <begin position="110"/>
        <end position="142"/>
    </location>
</feature>
<feature type="compositionally biased region" description="Low complexity" evidence="3">
    <location>
        <begin position="124"/>
        <end position="134"/>
    </location>
</feature>
<sequence length="572" mass="66107">MTEPTLNFHIQTHQNQFKIPHELIKKNFKLIQKLIEKQRKQLIDDISKIKKCKTTSPSFKLELIQKLIKNFESFMKKLQNFINKDEEFRSRLIARLENLTELQQYVITNNDNQEGQNHEESTENNNNNRNNNNNSTTTDDDKLLDFHNPNLINWYRDQTNLLIVDYLIKSNTRTRFEDNGEDNPGNIGLLLLKNLTKTNPKLLKLIDYDLLENFNKVFVSIINNHDLSLIVGWFNENKNLLNKINSNLEFEINYCKFLTLIEKGDINEAINYSRENLSGYGNKENYQQTNNNNNNTFSNGDTTSTNHLTNLERLKGLGGLLVFRSMENNNKNNNDLNSNDTPLSSKLMLNSTPFKEYQKLLSNERWESLAQCFIENFTKLYGISKNFPIYIYLSAGLSSLKTKSCYHNVENTIFKHSTGNGIDYDNGNDDYDDDDDDDDEGGVIDSNLSFISAETTTNTNTTSNSGKSLLNDPKYRGPNHYYKLLNKINNCPICSPELFKLSQNLPYAQLITSIFNNPFKLPNGNIYPFDKLLAPTDKYLSEKNTLLRANKVKDPLTREIFTIDSCIRVFPA</sequence>